<organism>
    <name type="scientific">Bacillus cereus (strain ATCC 10987 / NRS 248)</name>
    <dbReference type="NCBI Taxonomy" id="222523"/>
    <lineage>
        <taxon>Bacteria</taxon>
        <taxon>Bacillati</taxon>
        <taxon>Bacillota</taxon>
        <taxon>Bacilli</taxon>
        <taxon>Bacillales</taxon>
        <taxon>Bacillaceae</taxon>
        <taxon>Bacillus</taxon>
        <taxon>Bacillus cereus group</taxon>
    </lineage>
</organism>
<accession>Q73CW1</accession>
<protein>
    <recommendedName>
        <fullName evidence="1">UPF0342 protein BCE_0953</fullName>
    </recommendedName>
</protein>
<dbReference type="EMBL" id="AE017194">
    <property type="protein sequence ID" value="AAS39884.1"/>
    <property type="molecule type" value="Genomic_DNA"/>
</dbReference>
<dbReference type="SMR" id="Q73CW1"/>
<dbReference type="KEGG" id="bca:BCE_0953"/>
<dbReference type="HOGENOM" id="CLU_140243_3_0_9"/>
<dbReference type="Proteomes" id="UP000002527">
    <property type="component" value="Chromosome"/>
</dbReference>
<dbReference type="Gene3D" id="1.20.1500.10">
    <property type="entry name" value="YheA/YmcA-like"/>
    <property type="match status" value="1"/>
</dbReference>
<dbReference type="HAMAP" id="MF_01526">
    <property type="entry name" value="UPF0342"/>
    <property type="match status" value="1"/>
</dbReference>
<dbReference type="InterPro" id="IPR010368">
    <property type="entry name" value="Com_YlbF"/>
</dbReference>
<dbReference type="InterPro" id="IPR023378">
    <property type="entry name" value="YheA/YmcA-like_dom_sf"/>
</dbReference>
<dbReference type="NCBIfam" id="NF010211">
    <property type="entry name" value="PRK13676.1-4"/>
    <property type="match status" value="1"/>
</dbReference>
<dbReference type="Pfam" id="PF06133">
    <property type="entry name" value="Com_YlbF"/>
    <property type="match status" value="1"/>
</dbReference>
<dbReference type="SUPFAM" id="SSF158622">
    <property type="entry name" value="YheA/YmcA-like"/>
    <property type="match status" value="1"/>
</dbReference>
<comment type="similarity">
    <text evidence="1">Belongs to the UPF0342 family.</text>
</comment>
<name>Y953_BACC1</name>
<reference key="1">
    <citation type="journal article" date="2004" name="Nucleic Acids Res.">
        <title>The genome sequence of Bacillus cereus ATCC 10987 reveals metabolic adaptations and a large plasmid related to Bacillus anthracis pXO1.</title>
        <authorList>
            <person name="Rasko D.A."/>
            <person name="Ravel J."/>
            <person name="Oekstad O.A."/>
            <person name="Helgason E."/>
            <person name="Cer R.Z."/>
            <person name="Jiang L."/>
            <person name="Shores K.A."/>
            <person name="Fouts D.E."/>
            <person name="Tourasse N.J."/>
            <person name="Angiuoli S.V."/>
            <person name="Kolonay J.F."/>
            <person name="Nelson W.C."/>
            <person name="Kolstoe A.-B."/>
            <person name="Fraser C.M."/>
            <person name="Read T.D."/>
        </authorList>
    </citation>
    <scope>NUCLEOTIDE SEQUENCE [LARGE SCALE GENOMIC DNA]</scope>
    <source>
        <strain>ATCC 10987 / NRS 248</strain>
    </source>
</reference>
<sequence>MTKNIHDVAYELQKAIAENDDFKTLKESYAAVQADAASKNLFDEFRTMQLSLQQKMMQGQEITEEDNQQAQEVVARIQQDAKITKLMETEQRLNVVIGDVNKIIMKPLEELYSAQQQA</sequence>
<gene>
    <name type="ordered locus">BCE_0953</name>
</gene>
<evidence type="ECO:0000255" key="1">
    <source>
        <dbReference type="HAMAP-Rule" id="MF_01526"/>
    </source>
</evidence>
<proteinExistence type="inferred from homology"/>
<feature type="chain" id="PRO_0000109964" description="UPF0342 protein BCE_0953">
    <location>
        <begin position="1"/>
        <end position="118"/>
    </location>
</feature>